<reference key="1">
    <citation type="journal article" date="2001" name="Lancet">
        <title>Whole genome sequencing of meticillin-resistant Staphylococcus aureus.</title>
        <authorList>
            <person name="Kuroda M."/>
            <person name="Ohta T."/>
            <person name="Uchiyama I."/>
            <person name="Baba T."/>
            <person name="Yuzawa H."/>
            <person name="Kobayashi I."/>
            <person name="Cui L."/>
            <person name="Oguchi A."/>
            <person name="Aoki K."/>
            <person name="Nagai Y."/>
            <person name="Lian J.-Q."/>
            <person name="Ito T."/>
            <person name="Kanamori M."/>
            <person name="Matsumaru H."/>
            <person name="Maruyama A."/>
            <person name="Murakami H."/>
            <person name="Hosoyama A."/>
            <person name="Mizutani-Ui Y."/>
            <person name="Takahashi N.K."/>
            <person name="Sawano T."/>
            <person name="Inoue R."/>
            <person name="Kaito C."/>
            <person name="Sekimizu K."/>
            <person name="Hirakawa H."/>
            <person name="Kuhara S."/>
            <person name="Goto S."/>
            <person name="Yabuzaki J."/>
            <person name="Kanehisa M."/>
            <person name="Yamashita A."/>
            <person name="Oshima K."/>
            <person name="Furuya K."/>
            <person name="Yoshino C."/>
            <person name="Shiba T."/>
            <person name="Hattori M."/>
            <person name="Ogasawara N."/>
            <person name="Hayashi H."/>
            <person name="Hiramatsu K."/>
        </authorList>
    </citation>
    <scope>NUCLEOTIDE SEQUENCE [LARGE SCALE GENOMIC DNA]</scope>
    <source>
        <strain>Mu50 / ATCC 700699</strain>
    </source>
</reference>
<name>PUR3_STAAM</name>
<keyword id="KW-0658">Purine biosynthesis</keyword>
<keyword id="KW-0808">Transferase</keyword>
<gene>
    <name evidence="1" type="primary">purN</name>
    <name type="ordered locus">SAV1072</name>
</gene>
<comment type="function">
    <text evidence="1">Catalyzes the transfer of a formyl group from 10-formyltetrahydrofolate to 5-phospho-ribosyl-glycinamide (GAR), producing 5-phospho-ribosyl-N-formylglycinamide (FGAR) and tetrahydrofolate.</text>
</comment>
<comment type="catalytic activity">
    <reaction evidence="1">
        <text>N(1)-(5-phospho-beta-D-ribosyl)glycinamide + (6R)-10-formyltetrahydrofolate = N(2)-formyl-N(1)-(5-phospho-beta-D-ribosyl)glycinamide + (6S)-5,6,7,8-tetrahydrofolate + H(+)</text>
        <dbReference type="Rhea" id="RHEA:15053"/>
        <dbReference type="ChEBI" id="CHEBI:15378"/>
        <dbReference type="ChEBI" id="CHEBI:57453"/>
        <dbReference type="ChEBI" id="CHEBI:143788"/>
        <dbReference type="ChEBI" id="CHEBI:147286"/>
        <dbReference type="ChEBI" id="CHEBI:195366"/>
        <dbReference type="EC" id="2.1.2.2"/>
    </reaction>
</comment>
<comment type="pathway">
    <text evidence="1">Purine metabolism; IMP biosynthesis via de novo pathway; N(2)-formyl-N(1)-(5-phospho-D-ribosyl)glycinamide from N(1)-(5-phospho-D-ribosyl)glycinamide (10-formyl THF route): step 1/1.</text>
</comment>
<comment type="similarity">
    <text evidence="1">Belongs to the GART family.</text>
</comment>
<protein>
    <recommendedName>
        <fullName evidence="1">Phosphoribosylglycinamide formyltransferase</fullName>
        <ecNumber evidence="1">2.1.2.2</ecNumber>
    </recommendedName>
    <alternativeName>
        <fullName evidence="1">5'-phosphoribosylglycinamide transformylase</fullName>
    </alternativeName>
    <alternativeName>
        <fullName evidence="1">GAR transformylase</fullName>
        <shortName evidence="1">GART</shortName>
    </alternativeName>
</protein>
<proteinExistence type="inferred from homology"/>
<organism>
    <name type="scientific">Staphylococcus aureus (strain Mu50 / ATCC 700699)</name>
    <dbReference type="NCBI Taxonomy" id="158878"/>
    <lineage>
        <taxon>Bacteria</taxon>
        <taxon>Bacillati</taxon>
        <taxon>Bacillota</taxon>
        <taxon>Bacilli</taxon>
        <taxon>Bacillales</taxon>
        <taxon>Staphylococcaceae</taxon>
        <taxon>Staphylococcus</taxon>
    </lineage>
</organism>
<accession>P65897</accession>
<accession>Q99V25</accession>
<evidence type="ECO:0000255" key="1">
    <source>
        <dbReference type="HAMAP-Rule" id="MF_01930"/>
    </source>
</evidence>
<feature type="chain" id="PRO_0000074946" description="Phosphoribosylglycinamide formyltransferase">
    <location>
        <begin position="1"/>
        <end position="188"/>
    </location>
</feature>
<feature type="active site" description="Proton donor" evidence="1">
    <location>
        <position position="110"/>
    </location>
</feature>
<feature type="binding site" evidence="1">
    <location>
        <begin position="12"/>
        <end position="14"/>
    </location>
    <ligand>
        <name>N(1)-(5-phospho-beta-D-ribosyl)glycinamide</name>
        <dbReference type="ChEBI" id="CHEBI:143788"/>
    </ligand>
</feature>
<feature type="binding site" evidence="1">
    <location>
        <position position="66"/>
    </location>
    <ligand>
        <name>(6R)-10-formyltetrahydrofolate</name>
        <dbReference type="ChEBI" id="CHEBI:195366"/>
    </ligand>
</feature>
<feature type="binding site" evidence="1">
    <location>
        <begin position="91"/>
        <end position="94"/>
    </location>
    <ligand>
        <name>(6R)-10-formyltetrahydrofolate</name>
        <dbReference type="ChEBI" id="CHEBI:195366"/>
    </ligand>
</feature>
<feature type="binding site" evidence="1">
    <location>
        <position position="108"/>
    </location>
    <ligand>
        <name>(6R)-10-formyltetrahydrofolate</name>
        <dbReference type="ChEBI" id="CHEBI:195366"/>
    </ligand>
</feature>
<feature type="site" description="Raises pKa of active site His" evidence="1">
    <location>
        <position position="146"/>
    </location>
</feature>
<sequence length="188" mass="21166">MVKIAIFASGSGSNFENIVEHVESGKLENIEVTALYTDHQNAFCIDRAKKHDIPVYINEPKQFDSKAAYEQHLVTLLNKDKVEWIILAGYMRLIGPDLLASFEGKILNIHPSLLPKYKGIDAIGQAYHSGDTITGSTVHYVDCGMDTGEIIEQRQCDIRPDDSKEQLEEKVKKLEYELYPSVIAKIVK</sequence>
<dbReference type="EC" id="2.1.2.2" evidence="1"/>
<dbReference type="EMBL" id="BA000017">
    <property type="protein sequence ID" value="BAB57234.1"/>
    <property type="molecule type" value="Genomic_DNA"/>
</dbReference>
<dbReference type="RefSeq" id="WP_000238669.1">
    <property type="nucleotide sequence ID" value="NC_002758.2"/>
</dbReference>
<dbReference type="SMR" id="P65897"/>
<dbReference type="KEGG" id="sav:SAV1072"/>
<dbReference type="HOGENOM" id="CLU_038395_1_3_9"/>
<dbReference type="PhylomeDB" id="P65897"/>
<dbReference type="UniPathway" id="UPA00074">
    <property type="reaction ID" value="UER00126"/>
</dbReference>
<dbReference type="Proteomes" id="UP000002481">
    <property type="component" value="Chromosome"/>
</dbReference>
<dbReference type="GO" id="GO:0005829">
    <property type="term" value="C:cytosol"/>
    <property type="evidence" value="ECO:0007669"/>
    <property type="project" value="TreeGrafter"/>
</dbReference>
<dbReference type="GO" id="GO:0004644">
    <property type="term" value="F:phosphoribosylglycinamide formyltransferase activity"/>
    <property type="evidence" value="ECO:0007669"/>
    <property type="project" value="UniProtKB-UniRule"/>
</dbReference>
<dbReference type="GO" id="GO:0006189">
    <property type="term" value="P:'de novo' IMP biosynthetic process"/>
    <property type="evidence" value="ECO:0007669"/>
    <property type="project" value="UniProtKB-UniRule"/>
</dbReference>
<dbReference type="CDD" id="cd08645">
    <property type="entry name" value="FMT_core_GART"/>
    <property type="match status" value="1"/>
</dbReference>
<dbReference type="FunFam" id="3.40.50.170:FF:000014">
    <property type="entry name" value="Phosphoribosylglycinamide formyltransferase"/>
    <property type="match status" value="1"/>
</dbReference>
<dbReference type="Gene3D" id="3.40.50.170">
    <property type="entry name" value="Formyl transferase, N-terminal domain"/>
    <property type="match status" value="1"/>
</dbReference>
<dbReference type="HAMAP" id="MF_01930">
    <property type="entry name" value="PurN"/>
    <property type="match status" value="1"/>
</dbReference>
<dbReference type="InterPro" id="IPR002376">
    <property type="entry name" value="Formyl_transf_N"/>
</dbReference>
<dbReference type="InterPro" id="IPR036477">
    <property type="entry name" value="Formyl_transf_N_sf"/>
</dbReference>
<dbReference type="InterPro" id="IPR004607">
    <property type="entry name" value="GART"/>
</dbReference>
<dbReference type="NCBIfam" id="TIGR00639">
    <property type="entry name" value="PurN"/>
    <property type="match status" value="1"/>
</dbReference>
<dbReference type="PANTHER" id="PTHR43369">
    <property type="entry name" value="PHOSPHORIBOSYLGLYCINAMIDE FORMYLTRANSFERASE"/>
    <property type="match status" value="1"/>
</dbReference>
<dbReference type="PANTHER" id="PTHR43369:SF2">
    <property type="entry name" value="PHOSPHORIBOSYLGLYCINAMIDE FORMYLTRANSFERASE"/>
    <property type="match status" value="1"/>
</dbReference>
<dbReference type="Pfam" id="PF00551">
    <property type="entry name" value="Formyl_trans_N"/>
    <property type="match status" value="1"/>
</dbReference>
<dbReference type="SUPFAM" id="SSF53328">
    <property type="entry name" value="Formyltransferase"/>
    <property type="match status" value="1"/>
</dbReference>